<evidence type="ECO:0000255" key="1">
    <source>
        <dbReference type="HAMAP-Rule" id="MF_00197"/>
    </source>
</evidence>
<name>DAPF_BLOFL</name>
<dbReference type="EC" id="5.1.1.7" evidence="1"/>
<dbReference type="EMBL" id="BX248583">
    <property type="protein sequence ID" value="CAD83261.1"/>
    <property type="molecule type" value="Genomic_DNA"/>
</dbReference>
<dbReference type="SMR" id="Q7VRM5"/>
<dbReference type="STRING" id="203907.Bfl579"/>
<dbReference type="KEGG" id="bfl:Bfl579"/>
<dbReference type="eggNOG" id="COG0253">
    <property type="taxonomic scope" value="Bacteria"/>
</dbReference>
<dbReference type="HOGENOM" id="CLU_053306_1_1_6"/>
<dbReference type="OrthoDB" id="9805408at2"/>
<dbReference type="UniPathway" id="UPA00034">
    <property type="reaction ID" value="UER00025"/>
</dbReference>
<dbReference type="Proteomes" id="UP000002192">
    <property type="component" value="Chromosome"/>
</dbReference>
<dbReference type="GO" id="GO:0005829">
    <property type="term" value="C:cytosol"/>
    <property type="evidence" value="ECO:0007669"/>
    <property type="project" value="TreeGrafter"/>
</dbReference>
<dbReference type="GO" id="GO:0008837">
    <property type="term" value="F:diaminopimelate epimerase activity"/>
    <property type="evidence" value="ECO:0007669"/>
    <property type="project" value="UniProtKB-UniRule"/>
</dbReference>
<dbReference type="GO" id="GO:0009089">
    <property type="term" value="P:lysine biosynthetic process via diaminopimelate"/>
    <property type="evidence" value="ECO:0007669"/>
    <property type="project" value="UniProtKB-UniRule"/>
</dbReference>
<dbReference type="FunFam" id="3.10.310.10:FF:000001">
    <property type="entry name" value="Diaminopimelate epimerase"/>
    <property type="match status" value="1"/>
</dbReference>
<dbReference type="Gene3D" id="3.10.310.10">
    <property type="entry name" value="Diaminopimelate Epimerase, Chain A, domain 1"/>
    <property type="match status" value="2"/>
</dbReference>
<dbReference type="HAMAP" id="MF_00197">
    <property type="entry name" value="DAP_epimerase"/>
    <property type="match status" value="1"/>
</dbReference>
<dbReference type="InterPro" id="IPR018510">
    <property type="entry name" value="DAP_epimerase_AS"/>
</dbReference>
<dbReference type="InterPro" id="IPR001653">
    <property type="entry name" value="DAP_epimerase_DapF"/>
</dbReference>
<dbReference type="NCBIfam" id="TIGR00652">
    <property type="entry name" value="DapF"/>
    <property type="match status" value="1"/>
</dbReference>
<dbReference type="PANTHER" id="PTHR31689:SF0">
    <property type="entry name" value="DIAMINOPIMELATE EPIMERASE"/>
    <property type="match status" value="1"/>
</dbReference>
<dbReference type="PANTHER" id="PTHR31689">
    <property type="entry name" value="DIAMINOPIMELATE EPIMERASE, CHLOROPLASTIC"/>
    <property type="match status" value="1"/>
</dbReference>
<dbReference type="Pfam" id="PF01678">
    <property type="entry name" value="DAP_epimerase"/>
    <property type="match status" value="2"/>
</dbReference>
<dbReference type="SUPFAM" id="SSF54506">
    <property type="entry name" value="Diaminopimelate epimerase-like"/>
    <property type="match status" value="2"/>
</dbReference>
<dbReference type="PROSITE" id="PS01326">
    <property type="entry name" value="DAP_EPIMERASE"/>
    <property type="match status" value="1"/>
</dbReference>
<sequence length="276" mass="30812">MRFSKMHGLGNDFVIIDSITQKVYFNSDKIRSLSNRFYGIGFDQLLVVEPPYDPNIDFHCRIYNADGSEVYQCGNGIRCVARFVCIKKLTNKQHIKISTDTYSMMLSVLDSEFISVNMGEPIFDPIKIPFFSTQYQKMYVLFVPNFTILCGVVSIGNPHCVILVEQVDLVPVTVLGSILENHHCFPKKANISFMQIISQNNIKLRVYERGSGETKACGSAACAAVAIGIQQGLLKKNISVQVNLPGGDLFISWKGLGYPLYMIGSATYIYDGCINL</sequence>
<accession>Q7VRM5</accession>
<gene>
    <name evidence="1" type="primary">dapF</name>
    <name type="ordered locus">Bfl579</name>
</gene>
<comment type="function">
    <text evidence="1">Catalyzes the stereoinversion of LL-2,6-diaminopimelate (L,L-DAP) to meso-diaminopimelate (meso-DAP), a precursor of L-lysine and an essential component of the bacterial peptidoglycan.</text>
</comment>
<comment type="catalytic activity">
    <reaction evidence="1">
        <text>(2S,6S)-2,6-diaminopimelate = meso-2,6-diaminopimelate</text>
        <dbReference type="Rhea" id="RHEA:15393"/>
        <dbReference type="ChEBI" id="CHEBI:57609"/>
        <dbReference type="ChEBI" id="CHEBI:57791"/>
        <dbReference type="EC" id="5.1.1.7"/>
    </reaction>
</comment>
<comment type="pathway">
    <text evidence="1">Amino-acid biosynthesis; L-lysine biosynthesis via DAP pathway; DL-2,6-diaminopimelate from LL-2,6-diaminopimelate: step 1/1.</text>
</comment>
<comment type="subunit">
    <text evidence="1">Homodimer.</text>
</comment>
<comment type="subcellular location">
    <subcellularLocation>
        <location evidence="1">Cytoplasm</location>
    </subcellularLocation>
</comment>
<comment type="similarity">
    <text evidence="1">Belongs to the diaminopimelate epimerase family.</text>
</comment>
<reference key="1">
    <citation type="journal article" date="2003" name="Proc. Natl. Acad. Sci. U.S.A.">
        <title>The genome sequence of Blochmannia floridanus: comparative analysis of reduced genomes.</title>
        <authorList>
            <person name="Gil R."/>
            <person name="Silva F.J."/>
            <person name="Zientz E."/>
            <person name="Delmotte F."/>
            <person name="Gonzalez-Candelas F."/>
            <person name="Latorre A."/>
            <person name="Rausell C."/>
            <person name="Kamerbeek J."/>
            <person name="Gadau J."/>
            <person name="Hoelldobler B."/>
            <person name="van Ham R.C.H.J."/>
            <person name="Gross R."/>
            <person name="Moya A."/>
        </authorList>
    </citation>
    <scope>NUCLEOTIDE SEQUENCE [LARGE SCALE GENOMIC DNA]</scope>
</reference>
<proteinExistence type="inferred from homology"/>
<feature type="chain" id="PRO_1000058539" description="Diaminopimelate epimerase">
    <location>
        <begin position="1"/>
        <end position="276"/>
    </location>
</feature>
<feature type="active site" description="Proton donor" evidence="1">
    <location>
        <position position="73"/>
    </location>
</feature>
<feature type="active site" description="Proton acceptor" evidence="1">
    <location>
        <position position="217"/>
    </location>
</feature>
<feature type="binding site" evidence="1">
    <location>
        <position position="11"/>
    </location>
    <ligand>
        <name>substrate</name>
    </ligand>
</feature>
<feature type="binding site" evidence="1">
    <location>
        <position position="44"/>
    </location>
    <ligand>
        <name>substrate</name>
    </ligand>
</feature>
<feature type="binding site" evidence="1">
    <location>
        <position position="64"/>
    </location>
    <ligand>
        <name>substrate</name>
    </ligand>
</feature>
<feature type="binding site" evidence="1">
    <location>
        <begin position="74"/>
        <end position="75"/>
    </location>
    <ligand>
        <name>substrate</name>
    </ligand>
</feature>
<feature type="binding site" evidence="1">
    <location>
        <position position="157"/>
    </location>
    <ligand>
        <name>substrate</name>
    </ligand>
</feature>
<feature type="binding site" evidence="1">
    <location>
        <position position="190"/>
    </location>
    <ligand>
        <name>substrate</name>
    </ligand>
</feature>
<feature type="binding site" evidence="1">
    <location>
        <begin position="208"/>
        <end position="209"/>
    </location>
    <ligand>
        <name>substrate</name>
    </ligand>
</feature>
<feature type="binding site" evidence="1">
    <location>
        <begin position="218"/>
        <end position="219"/>
    </location>
    <ligand>
        <name>substrate</name>
    </ligand>
</feature>
<feature type="site" description="Could be important to modulate the pK values of the two catalytic cysteine residues" evidence="1">
    <location>
        <position position="159"/>
    </location>
</feature>
<feature type="site" description="Could be important to modulate the pK values of the two catalytic cysteine residues" evidence="1">
    <location>
        <position position="208"/>
    </location>
</feature>
<feature type="site" description="Important for dimerization" evidence="1">
    <location>
        <position position="270"/>
    </location>
</feature>
<organism>
    <name type="scientific">Blochmanniella floridana</name>
    <dbReference type="NCBI Taxonomy" id="203907"/>
    <lineage>
        <taxon>Bacteria</taxon>
        <taxon>Pseudomonadati</taxon>
        <taxon>Pseudomonadota</taxon>
        <taxon>Gammaproteobacteria</taxon>
        <taxon>Enterobacterales</taxon>
        <taxon>Enterobacteriaceae</taxon>
        <taxon>ant endosymbionts</taxon>
        <taxon>Candidatus Blochmanniella</taxon>
    </lineage>
</organism>
<protein>
    <recommendedName>
        <fullName evidence="1">Diaminopimelate epimerase</fullName>
        <shortName evidence="1">DAP epimerase</shortName>
        <ecNumber evidence="1">5.1.1.7</ecNumber>
    </recommendedName>
    <alternativeName>
        <fullName evidence="1">PLP-independent amino acid racemase</fullName>
    </alternativeName>
</protein>
<keyword id="KW-0028">Amino-acid biosynthesis</keyword>
<keyword id="KW-0963">Cytoplasm</keyword>
<keyword id="KW-0413">Isomerase</keyword>
<keyword id="KW-0457">Lysine biosynthesis</keyword>
<keyword id="KW-1185">Reference proteome</keyword>